<keyword id="KW-0143">Chaperone</keyword>
<keyword id="KW-0963">Cytoplasm</keyword>
<keyword id="KW-1015">Disulfide bond</keyword>
<keyword id="KW-0676">Redox-active center</keyword>
<keyword id="KW-0862">Zinc</keyword>
<comment type="function">
    <text evidence="1">Redox regulated molecular chaperone. Protects both thermally unfolding and oxidatively damaged proteins from irreversible aggregation. Plays an important role in the bacterial defense system toward oxidative stress.</text>
</comment>
<comment type="subcellular location">
    <subcellularLocation>
        <location evidence="1">Cytoplasm</location>
    </subcellularLocation>
</comment>
<comment type="PTM">
    <text evidence="1">Under oxidizing conditions two disulfide bonds are formed involving the reactive cysteines. Under reducing conditions zinc is bound to the reactive cysteines and the protein is inactive.</text>
</comment>
<comment type="similarity">
    <text evidence="1">Belongs to the HSP33 family.</text>
</comment>
<gene>
    <name evidence="1" type="primary">hslO</name>
    <name type="ordered locus">CLH_2252</name>
</gene>
<accession>B2V5A4</accession>
<proteinExistence type="inferred from homology"/>
<protein>
    <recommendedName>
        <fullName evidence="1">33 kDa chaperonin</fullName>
    </recommendedName>
    <alternativeName>
        <fullName evidence="1">Heat shock protein 33 homolog</fullName>
        <shortName evidence="1">HSP33</shortName>
    </alternativeName>
</protein>
<organism>
    <name type="scientific">Clostridium botulinum (strain Alaska E43 / Type E3)</name>
    <dbReference type="NCBI Taxonomy" id="508767"/>
    <lineage>
        <taxon>Bacteria</taxon>
        <taxon>Bacillati</taxon>
        <taxon>Bacillota</taxon>
        <taxon>Clostridia</taxon>
        <taxon>Eubacteriales</taxon>
        <taxon>Clostridiaceae</taxon>
        <taxon>Clostridium</taxon>
    </lineage>
</organism>
<reference key="1">
    <citation type="submission" date="2008-05" db="EMBL/GenBank/DDBJ databases">
        <title>Complete genome sequence of Clostridium botulinum E3 str. Alaska E43.</title>
        <authorList>
            <person name="Brinkac L.M."/>
            <person name="Brown J.L."/>
            <person name="Bruce D."/>
            <person name="Detter C."/>
            <person name="Munk C."/>
            <person name="Smith L.A."/>
            <person name="Smith T.J."/>
            <person name="Sutton G."/>
            <person name="Brettin T.S."/>
        </authorList>
    </citation>
    <scope>NUCLEOTIDE SEQUENCE [LARGE SCALE GENOMIC DNA]</scope>
    <source>
        <strain>Alaska E43 / Type E3</strain>
    </source>
</reference>
<evidence type="ECO:0000255" key="1">
    <source>
        <dbReference type="HAMAP-Rule" id="MF_00117"/>
    </source>
</evidence>
<sequence>MNDKIVRATAKNGMVRIIGGITTNLVNEGSKIHECTPVAAAALGRMLTAGTLMGTTLKGEKESLTLKINGGGEAKGITITAHNDASVKGFIGNPYVTRELNDKGKLDVGGAIGKDGLLYVIKDLGLKEPYVGQVPIYSGEIAEDFAYYFTVSEQTPSAVSLGVLVDKDLSIKAAGGFIVQMMPDADELLADLVTYRLEEIPPITTLISEGKTIEEILEFIFEGMDLNILDSIEPSYKCDCSREKVEKALASIGKKDLQEIYDDGKNEEIVCNFCNTKYSFTTNDIGELLKNSIKK</sequence>
<dbReference type="EMBL" id="CP001078">
    <property type="protein sequence ID" value="ACD53844.1"/>
    <property type="molecule type" value="Genomic_DNA"/>
</dbReference>
<dbReference type="RefSeq" id="WP_012451667.1">
    <property type="nucleotide sequence ID" value="NC_010723.1"/>
</dbReference>
<dbReference type="SMR" id="B2V5A4"/>
<dbReference type="KEGG" id="cbt:CLH_2252"/>
<dbReference type="HOGENOM" id="CLU_054493_1_0_9"/>
<dbReference type="GO" id="GO:0005737">
    <property type="term" value="C:cytoplasm"/>
    <property type="evidence" value="ECO:0007669"/>
    <property type="project" value="UniProtKB-SubCell"/>
</dbReference>
<dbReference type="GO" id="GO:0044183">
    <property type="term" value="F:protein folding chaperone"/>
    <property type="evidence" value="ECO:0007669"/>
    <property type="project" value="TreeGrafter"/>
</dbReference>
<dbReference type="GO" id="GO:0051082">
    <property type="term" value="F:unfolded protein binding"/>
    <property type="evidence" value="ECO:0007669"/>
    <property type="project" value="UniProtKB-UniRule"/>
</dbReference>
<dbReference type="GO" id="GO:0042026">
    <property type="term" value="P:protein refolding"/>
    <property type="evidence" value="ECO:0007669"/>
    <property type="project" value="TreeGrafter"/>
</dbReference>
<dbReference type="CDD" id="cd00498">
    <property type="entry name" value="Hsp33"/>
    <property type="match status" value="1"/>
</dbReference>
<dbReference type="Gene3D" id="3.55.30.10">
    <property type="entry name" value="Hsp33 domain"/>
    <property type="match status" value="1"/>
</dbReference>
<dbReference type="Gene3D" id="3.90.1280.10">
    <property type="entry name" value="HSP33 redox switch-like"/>
    <property type="match status" value="1"/>
</dbReference>
<dbReference type="HAMAP" id="MF_00117">
    <property type="entry name" value="HslO"/>
    <property type="match status" value="1"/>
</dbReference>
<dbReference type="InterPro" id="IPR000397">
    <property type="entry name" value="Heat_shock_Hsp33"/>
</dbReference>
<dbReference type="InterPro" id="IPR016154">
    <property type="entry name" value="Heat_shock_Hsp33_C"/>
</dbReference>
<dbReference type="InterPro" id="IPR016153">
    <property type="entry name" value="Heat_shock_Hsp33_N"/>
</dbReference>
<dbReference type="NCBIfam" id="NF001033">
    <property type="entry name" value="PRK00114.1"/>
    <property type="match status" value="1"/>
</dbReference>
<dbReference type="PANTHER" id="PTHR30111">
    <property type="entry name" value="33 KDA CHAPERONIN"/>
    <property type="match status" value="1"/>
</dbReference>
<dbReference type="PANTHER" id="PTHR30111:SF1">
    <property type="entry name" value="33 KDA CHAPERONIN"/>
    <property type="match status" value="1"/>
</dbReference>
<dbReference type="Pfam" id="PF01430">
    <property type="entry name" value="HSP33"/>
    <property type="match status" value="1"/>
</dbReference>
<dbReference type="PIRSF" id="PIRSF005261">
    <property type="entry name" value="Heat_shock_Hsp33"/>
    <property type="match status" value="1"/>
</dbReference>
<dbReference type="SUPFAM" id="SSF64397">
    <property type="entry name" value="Hsp33 domain"/>
    <property type="match status" value="1"/>
</dbReference>
<dbReference type="SUPFAM" id="SSF118352">
    <property type="entry name" value="HSP33 redox switch-like"/>
    <property type="match status" value="1"/>
</dbReference>
<name>HSLO_CLOBA</name>
<feature type="chain" id="PRO_1000095012" description="33 kDa chaperonin">
    <location>
        <begin position="1"/>
        <end position="295"/>
    </location>
</feature>
<feature type="disulfide bond" description="Redox-active" evidence="1">
    <location>
        <begin position="238"/>
        <end position="240"/>
    </location>
</feature>
<feature type="disulfide bond" description="Redox-active" evidence="1">
    <location>
        <begin position="271"/>
        <end position="274"/>
    </location>
</feature>